<proteinExistence type="inferred from homology"/>
<reference key="1">
    <citation type="journal article" date="2003" name="Proc. Natl. Acad. Sci. U.S.A.">
        <title>Complete genome sequence of the marine planctomycete Pirellula sp. strain 1.</title>
        <authorList>
            <person name="Gloeckner F.O."/>
            <person name="Kube M."/>
            <person name="Bauer M."/>
            <person name="Teeling H."/>
            <person name="Lombardot T."/>
            <person name="Ludwig W."/>
            <person name="Gade D."/>
            <person name="Beck A."/>
            <person name="Borzym K."/>
            <person name="Heitmann K."/>
            <person name="Rabus R."/>
            <person name="Schlesner H."/>
            <person name="Amann R."/>
            <person name="Reinhardt R."/>
        </authorList>
    </citation>
    <scope>NUCLEOTIDE SEQUENCE [LARGE SCALE GENOMIC DNA]</scope>
    <source>
        <strain>DSM 10527 / NCIMB 13988 / SH1</strain>
    </source>
</reference>
<sequence length="146" mass="15885">MAVRIRMKKMGRTHRPFFRVCAVDQRNPRDGRVIEELGTYDPMCPETDARTTLKADRVDYWIGVGAQPSDKVAVLIKKYGTDGSHLEAQKAAVERLGRRKDYTPPPEAPAPKAAPVAEAPAEEAPAEEPAAEASTDDAPAAEATTE</sequence>
<comment type="similarity">
    <text evidence="1">Belongs to the bacterial ribosomal protein bS16 family.</text>
</comment>
<accession>Q7UI12</accession>
<name>RS16_RHOBA</name>
<keyword id="KW-1185">Reference proteome</keyword>
<keyword id="KW-0687">Ribonucleoprotein</keyword>
<keyword id="KW-0689">Ribosomal protein</keyword>
<gene>
    <name evidence="1" type="primary">rpsP</name>
    <name type="ordered locus">RB12824</name>
</gene>
<protein>
    <recommendedName>
        <fullName evidence="1">Small ribosomal subunit protein bS16</fullName>
    </recommendedName>
    <alternativeName>
        <fullName evidence="3">30S ribosomal protein S16</fullName>
    </alternativeName>
</protein>
<dbReference type="EMBL" id="BX294155">
    <property type="protein sequence ID" value="CAD77803.1"/>
    <property type="molecule type" value="Genomic_DNA"/>
</dbReference>
<dbReference type="RefSeq" id="NP_870726.1">
    <property type="nucleotide sequence ID" value="NC_005027.1"/>
</dbReference>
<dbReference type="SMR" id="Q7UI12"/>
<dbReference type="FunCoup" id="Q7UI12">
    <property type="interactions" value="536"/>
</dbReference>
<dbReference type="STRING" id="243090.RB12824"/>
<dbReference type="EnsemblBacteria" id="CAD77803">
    <property type="protein sequence ID" value="CAD77803"/>
    <property type="gene ID" value="RB12824"/>
</dbReference>
<dbReference type="KEGG" id="rba:RB12824"/>
<dbReference type="PATRIC" id="fig|243090.15.peg.6212"/>
<dbReference type="eggNOG" id="COG0228">
    <property type="taxonomic scope" value="Bacteria"/>
</dbReference>
<dbReference type="HOGENOM" id="CLU_100590_3_1_0"/>
<dbReference type="InParanoid" id="Q7UI12"/>
<dbReference type="OrthoDB" id="9807878at2"/>
<dbReference type="Proteomes" id="UP000001025">
    <property type="component" value="Chromosome"/>
</dbReference>
<dbReference type="GO" id="GO:0005737">
    <property type="term" value="C:cytoplasm"/>
    <property type="evidence" value="ECO:0007669"/>
    <property type="project" value="UniProtKB-ARBA"/>
</dbReference>
<dbReference type="GO" id="GO:0015935">
    <property type="term" value="C:small ribosomal subunit"/>
    <property type="evidence" value="ECO:0000318"/>
    <property type="project" value="GO_Central"/>
</dbReference>
<dbReference type="GO" id="GO:0003735">
    <property type="term" value="F:structural constituent of ribosome"/>
    <property type="evidence" value="ECO:0000318"/>
    <property type="project" value="GO_Central"/>
</dbReference>
<dbReference type="GO" id="GO:0006412">
    <property type="term" value="P:translation"/>
    <property type="evidence" value="ECO:0007669"/>
    <property type="project" value="UniProtKB-UniRule"/>
</dbReference>
<dbReference type="Gene3D" id="3.30.1320.10">
    <property type="match status" value="1"/>
</dbReference>
<dbReference type="HAMAP" id="MF_00385">
    <property type="entry name" value="Ribosomal_bS16"/>
    <property type="match status" value="1"/>
</dbReference>
<dbReference type="InterPro" id="IPR000307">
    <property type="entry name" value="Ribosomal_bS16"/>
</dbReference>
<dbReference type="InterPro" id="IPR023803">
    <property type="entry name" value="Ribosomal_bS16_dom_sf"/>
</dbReference>
<dbReference type="NCBIfam" id="TIGR00002">
    <property type="entry name" value="S16"/>
    <property type="match status" value="1"/>
</dbReference>
<dbReference type="PANTHER" id="PTHR12919">
    <property type="entry name" value="30S RIBOSOMAL PROTEIN S16"/>
    <property type="match status" value="1"/>
</dbReference>
<dbReference type="PANTHER" id="PTHR12919:SF20">
    <property type="entry name" value="SMALL RIBOSOMAL SUBUNIT PROTEIN BS16M"/>
    <property type="match status" value="1"/>
</dbReference>
<dbReference type="Pfam" id="PF00886">
    <property type="entry name" value="Ribosomal_S16"/>
    <property type="match status" value="1"/>
</dbReference>
<dbReference type="SUPFAM" id="SSF54565">
    <property type="entry name" value="Ribosomal protein S16"/>
    <property type="match status" value="1"/>
</dbReference>
<evidence type="ECO:0000255" key="1">
    <source>
        <dbReference type="HAMAP-Rule" id="MF_00385"/>
    </source>
</evidence>
<evidence type="ECO:0000256" key="2">
    <source>
        <dbReference type="SAM" id="MobiDB-lite"/>
    </source>
</evidence>
<evidence type="ECO:0000305" key="3"/>
<feature type="chain" id="PRO_0000167232" description="Small ribosomal subunit protein bS16">
    <location>
        <begin position="1"/>
        <end position="146"/>
    </location>
</feature>
<feature type="region of interest" description="Disordered" evidence="2">
    <location>
        <begin position="84"/>
        <end position="146"/>
    </location>
</feature>
<feature type="compositionally biased region" description="Basic and acidic residues" evidence="2">
    <location>
        <begin position="84"/>
        <end position="102"/>
    </location>
</feature>
<feature type="compositionally biased region" description="Low complexity" evidence="2">
    <location>
        <begin position="110"/>
        <end position="119"/>
    </location>
</feature>
<feature type="compositionally biased region" description="Acidic residues" evidence="2">
    <location>
        <begin position="120"/>
        <end position="130"/>
    </location>
</feature>
<feature type="compositionally biased region" description="Low complexity" evidence="2">
    <location>
        <begin position="131"/>
        <end position="146"/>
    </location>
</feature>
<organism>
    <name type="scientific">Rhodopirellula baltica (strain DSM 10527 / NCIMB 13988 / SH1)</name>
    <dbReference type="NCBI Taxonomy" id="243090"/>
    <lineage>
        <taxon>Bacteria</taxon>
        <taxon>Pseudomonadati</taxon>
        <taxon>Planctomycetota</taxon>
        <taxon>Planctomycetia</taxon>
        <taxon>Pirellulales</taxon>
        <taxon>Pirellulaceae</taxon>
        <taxon>Rhodopirellula</taxon>
    </lineage>
</organism>